<reference key="1">
    <citation type="journal article" date="2010" name="Genome Biol. Evol.">
        <title>Continuing evolution of Burkholderia mallei through genome reduction and large-scale rearrangements.</title>
        <authorList>
            <person name="Losada L."/>
            <person name="Ronning C.M."/>
            <person name="DeShazer D."/>
            <person name="Woods D."/>
            <person name="Fedorova N."/>
            <person name="Kim H.S."/>
            <person name="Shabalina S.A."/>
            <person name="Pearson T.R."/>
            <person name="Brinkac L."/>
            <person name="Tan P."/>
            <person name="Nandi T."/>
            <person name="Crabtree J."/>
            <person name="Badger J."/>
            <person name="Beckstrom-Sternberg S."/>
            <person name="Saqib M."/>
            <person name="Schutzer S.E."/>
            <person name="Keim P."/>
            <person name="Nierman W.C."/>
        </authorList>
    </citation>
    <scope>NUCLEOTIDE SEQUENCE [LARGE SCALE GENOMIC DNA]</scope>
    <source>
        <strain>NCTC 10247</strain>
    </source>
</reference>
<proteinExistence type="inferred from homology"/>
<keyword id="KW-1003">Cell membrane</keyword>
<keyword id="KW-0210">Decarboxylase</keyword>
<keyword id="KW-0444">Lipid biosynthesis</keyword>
<keyword id="KW-0443">Lipid metabolism</keyword>
<keyword id="KW-0456">Lyase</keyword>
<keyword id="KW-0472">Membrane</keyword>
<keyword id="KW-0594">Phospholipid biosynthesis</keyword>
<keyword id="KW-1208">Phospholipid metabolism</keyword>
<keyword id="KW-0670">Pyruvate</keyword>
<keyword id="KW-0865">Zymogen</keyword>
<feature type="chain" id="PRO_1000026636" description="Phosphatidylserine decarboxylase beta chain" evidence="1">
    <location>
        <begin position="1"/>
        <end position="181"/>
    </location>
</feature>
<feature type="chain" id="PRO_1000026637" description="Phosphatidylserine decarboxylase alpha chain" evidence="1">
    <location>
        <begin position="182"/>
        <end position="216"/>
    </location>
</feature>
<feature type="active site" description="Schiff-base intermediate with substrate; via pyruvic acid" evidence="1">
    <location>
        <position position="182"/>
    </location>
</feature>
<feature type="site" description="Cleavage (non-hydrolytic); by autocatalysis" evidence="1">
    <location>
        <begin position="181"/>
        <end position="182"/>
    </location>
</feature>
<feature type="modified residue" description="Pyruvic acid (Ser); by autocatalysis" evidence="1">
    <location>
        <position position="182"/>
    </location>
</feature>
<comment type="function">
    <text evidence="1">Catalyzes the formation of phosphatidylethanolamine (PtdEtn) from phosphatidylserine (PtdSer).</text>
</comment>
<comment type="catalytic activity">
    <reaction evidence="1">
        <text>a 1,2-diacyl-sn-glycero-3-phospho-L-serine + H(+) = a 1,2-diacyl-sn-glycero-3-phosphoethanolamine + CO2</text>
        <dbReference type="Rhea" id="RHEA:20828"/>
        <dbReference type="ChEBI" id="CHEBI:15378"/>
        <dbReference type="ChEBI" id="CHEBI:16526"/>
        <dbReference type="ChEBI" id="CHEBI:57262"/>
        <dbReference type="ChEBI" id="CHEBI:64612"/>
        <dbReference type="EC" id="4.1.1.65"/>
    </reaction>
</comment>
<comment type="cofactor">
    <cofactor evidence="1">
        <name>pyruvate</name>
        <dbReference type="ChEBI" id="CHEBI:15361"/>
    </cofactor>
    <text evidence="1">Binds 1 pyruvoyl group covalently per subunit.</text>
</comment>
<comment type="pathway">
    <text evidence="1">Phospholipid metabolism; phosphatidylethanolamine biosynthesis; phosphatidylethanolamine from CDP-diacylglycerol: step 2/2.</text>
</comment>
<comment type="subunit">
    <text evidence="1">Heterodimer of a large membrane-associated beta subunit and a small pyruvoyl-containing alpha subunit.</text>
</comment>
<comment type="subcellular location">
    <subcellularLocation>
        <location evidence="1">Cell membrane</location>
        <topology evidence="1">Peripheral membrane protein</topology>
    </subcellularLocation>
</comment>
<comment type="PTM">
    <text evidence="1">Is synthesized initially as an inactive proenzyme. Formation of the active enzyme involves a self-maturation process in which the active site pyruvoyl group is generated from an internal serine residue via an autocatalytic post-translational modification. Two non-identical subunits are generated from the proenzyme in this reaction, and the pyruvate is formed at the N-terminus of the alpha chain, which is derived from the carboxyl end of the proenzyme. The post-translation cleavage follows an unusual pathway, termed non-hydrolytic serinolysis, in which the side chain hydroxyl group of the serine supplies its oxygen atom to form the C-terminus of the beta chain, while the remainder of the serine residue undergoes an oxidative deamination to produce ammonia and the pyruvoyl prosthetic group on the alpha chain.</text>
</comment>
<comment type="similarity">
    <text evidence="1">Belongs to the phosphatidylserine decarboxylase family. PSD-A subfamily.</text>
</comment>
<name>PSD_BURM7</name>
<dbReference type="EC" id="4.1.1.65" evidence="1"/>
<dbReference type="EMBL" id="CP000548">
    <property type="protein sequence ID" value="ABO05505.1"/>
    <property type="molecule type" value="Genomic_DNA"/>
</dbReference>
<dbReference type="RefSeq" id="WP_004196436.1">
    <property type="nucleotide sequence ID" value="NZ_CP007802.1"/>
</dbReference>
<dbReference type="SMR" id="A3MI88"/>
<dbReference type="KEGG" id="bmaz:BM44_2611"/>
<dbReference type="KEGG" id="bmn:BMA10247_0399"/>
<dbReference type="PATRIC" id="fig|320389.8.peg.2945"/>
<dbReference type="UniPathway" id="UPA00558">
    <property type="reaction ID" value="UER00616"/>
</dbReference>
<dbReference type="GO" id="GO:0005886">
    <property type="term" value="C:plasma membrane"/>
    <property type="evidence" value="ECO:0007669"/>
    <property type="project" value="UniProtKB-SubCell"/>
</dbReference>
<dbReference type="GO" id="GO:0004609">
    <property type="term" value="F:phosphatidylserine decarboxylase activity"/>
    <property type="evidence" value="ECO:0007669"/>
    <property type="project" value="UniProtKB-UniRule"/>
</dbReference>
<dbReference type="GO" id="GO:0006646">
    <property type="term" value="P:phosphatidylethanolamine biosynthetic process"/>
    <property type="evidence" value="ECO:0007669"/>
    <property type="project" value="UniProtKB-UniRule"/>
</dbReference>
<dbReference type="HAMAP" id="MF_00664">
    <property type="entry name" value="PS_decarb_PSD_A"/>
    <property type="match status" value="1"/>
</dbReference>
<dbReference type="InterPro" id="IPR003817">
    <property type="entry name" value="PS_Dcarbxylase"/>
</dbReference>
<dbReference type="InterPro" id="IPR033175">
    <property type="entry name" value="PSD-A"/>
</dbReference>
<dbReference type="NCBIfam" id="TIGR00164">
    <property type="entry name" value="AS_decarb"/>
    <property type="match status" value="1"/>
</dbReference>
<dbReference type="NCBIfam" id="NF003678">
    <property type="entry name" value="PRK05305.1-2"/>
    <property type="match status" value="1"/>
</dbReference>
<dbReference type="NCBIfam" id="NF003680">
    <property type="entry name" value="PRK05305.1-5"/>
    <property type="match status" value="1"/>
</dbReference>
<dbReference type="NCBIfam" id="NF003685">
    <property type="entry name" value="PRK05305.2-5"/>
    <property type="match status" value="1"/>
</dbReference>
<dbReference type="PANTHER" id="PTHR35809">
    <property type="entry name" value="ARCHAETIDYLSERINE DECARBOXYLASE PROENZYME-RELATED"/>
    <property type="match status" value="1"/>
</dbReference>
<dbReference type="PANTHER" id="PTHR35809:SF1">
    <property type="entry name" value="ARCHAETIDYLSERINE DECARBOXYLASE PROENZYME-RELATED"/>
    <property type="match status" value="1"/>
</dbReference>
<dbReference type="Pfam" id="PF02666">
    <property type="entry name" value="PS_Dcarbxylase"/>
    <property type="match status" value="1"/>
</dbReference>
<organism>
    <name type="scientific">Burkholderia mallei (strain NCTC 10247)</name>
    <dbReference type="NCBI Taxonomy" id="320389"/>
    <lineage>
        <taxon>Bacteria</taxon>
        <taxon>Pseudomonadati</taxon>
        <taxon>Pseudomonadota</taxon>
        <taxon>Betaproteobacteria</taxon>
        <taxon>Burkholderiales</taxon>
        <taxon>Burkholderiaceae</taxon>
        <taxon>Burkholderia</taxon>
        <taxon>pseudomallei group</taxon>
    </lineage>
</organism>
<protein>
    <recommendedName>
        <fullName evidence="1">Phosphatidylserine decarboxylase proenzyme</fullName>
        <ecNumber evidence="1">4.1.1.65</ecNumber>
    </recommendedName>
    <component>
        <recommendedName>
            <fullName evidence="1">Phosphatidylserine decarboxylase alpha chain</fullName>
        </recommendedName>
    </component>
    <component>
        <recommendedName>
            <fullName evidence="1">Phosphatidylserine decarboxylase beta chain</fullName>
        </recommendedName>
    </component>
</protein>
<sequence length="216" mass="23462">MNYPHPIIAREGWPFIAIAAVVALLIHAVGGFGLAWPFWLLLVFVVQFFRDPPRAVPTQANAVLCPADGRIVAVETAHDPYADREALKISVFMNVFNVHSQRSPVDGAVQKVEYFPGAFLNAALDKASAENERNAVVIQTGAGHTVTAVQIAGLVARRILCYVRAGEPLSRGQRYGFIRFGSRVDVYLPKGSRARVSIGEKVSASSTILAELPEQP</sequence>
<gene>
    <name evidence="1" type="primary">psd</name>
    <name type="ordered locus">BMA10247_0399</name>
</gene>
<accession>A3MI88</accession>
<evidence type="ECO:0000255" key="1">
    <source>
        <dbReference type="HAMAP-Rule" id="MF_00664"/>
    </source>
</evidence>